<sequence length="374" mass="43202">MAIRKKSSKNPPVLSHEFVLQNHADIVSCVAMVFLLGLMFEITAKVSIIFVTLQYNVTLPATEEQATESAFLYYYGIKDLATVFFYMLVAIIIHAIIQEYVLDKINRRMHFSKTKHSKFNESGQLSAFYLFSCIWGTFILISENYISDPTILWRAYPHNLMTFQMKFFYISQLAYWFHAFPELYFQKTKKEDIPRQLVYIGLYLFHIAGAYLLNLNHLGLVLLVLHYFVEFLFHISRLFYFSDEKYQKGFSLWAVLFVLGRLLTLILSVLTVGFGLARAENQKLDFSTGNFNVLAVRIAVLASICITQAFMMWKFINFQLRRWREHSAFQAPAVKKKPPVTKGRSSRKGTENGVNGTVTSNGADSPRNRKEKSS</sequence>
<organism>
    <name type="scientific">Bos taurus</name>
    <name type="common">Bovine</name>
    <dbReference type="NCBI Taxonomy" id="9913"/>
    <lineage>
        <taxon>Eukaryota</taxon>
        <taxon>Metazoa</taxon>
        <taxon>Chordata</taxon>
        <taxon>Craniata</taxon>
        <taxon>Vertebrata</taxon>
        <taxon>Euteleostomi</taxon>
        <taxon>Mammalia</taxon>
        <taxon>Eutheria</taxon>
        <taxon>Laurasiatheria</taxon>
        <taxon>Artiodactyla</taxon>
        <taxon>Ruminantia</taxon>
        <taxon>Pecora</taxon>
        <taxon>Bovidae</taxon>
        <taxon>Bovinae</taxon>
        <taxon>Bos</taxon>
    </lineage>
</organism>
<dbReference type="EMBL" id="BC104557">
    <property type="protein sequence ID" value="AAI04558.1"/>
    <property type="molecule type" value="mRNA"/>
</dbReference>
<dbReference type="EMBL" id="U19578">
    <property type="protein sequence ID" value="AAG10391.1"/>
    <property type="molecule type" value="mRNA"/>
</dbReference>
<dbReference type="RefSeq" id="NP_001035566.1">
    <property type="nucleotide sequence ID" value="NM_001040476.2"/>
</dbReference>
<dbReference type="SMR" id="Q9GKZ4"/>
<dbReference type="FunCoup" id="Q9GKZ4">
    <property type="interactions" value="1331"/>
</dbReference>
<dbReference type="STRING" id="9913.ENSBTAP00000009951"/>
<dbReference type="GlyCosmos" id="Q9GKZ4">
    <property type="glycosylation" value="1 site, No reported glycans"/>
</dbReference>
<dbReference type="GlyGen" id="Q9GKZ4">
    <property type="glycosylation" value="1 site"/>
</dbReference>
<dbReference type="PaxDb" id="9913-ENSBTAP00000009951"/>
<dbReference type="Ensembl" id="ENSBTAT00000009951.5">
    <property type="protein sequence ID" value="ENSBTAP00000009951.4"/>
    <property type="gene ID" value="ENSBTAG00000007562.5"/>
</dbReference>
<dbReference type="GeneID" id="281546"/>
<dbReference type="KEGG" id="bta:281546"/>
<dbReference type="CTD" id="23471"/>
<dbReference type="VEuPathDB" id="HostDB:ENSBTAG00000007562"/>
<dbReference type="VGNC" id="VGNC:53882">
    <property type="gene designation" value="TRAM1"/>
</dbReference>
<dbReference type="eggNOG" id="KOG1608">
    <property type="taxonomic scope" value="Eukaryota"/>
</dbReference>
<dbReference type="GeneTree" id="ENSGT00510000046470"/>
<dbReference type="InParanoid" id="Q9GKZ4"/>
<dbReference type="OMA" id="CAVFFYF"/>
<dbReference type="OrthoDB" id="3053196at2759"/>
<dbReference type="Proteomes" id="UP000009136">
    <property type="component" value="Chromosome 14"/>
</dbReference>
<dbReference type="Bgee" id="ENSBTAG00000007562">
    <property type="expression patterns" value="Expressed in caput epididymis and 108 other cell types or tissues"/>
</dbReference>
<dbReference type="GO" id="GO:0005789">
    <property type="term" value="C:endoplasmic reticulum membrane"/>
    <property type="evidence" value="ECO:0000250"/>
    <property type="project" value="UniProtKB"/>
</dbReference>
<dbReference type="GO" id="GO:0006613">
    <property type="term" value="P:cotranslational protein targeting to membrane"/>
    <property type="evidence" value="ECO:0000250"/>
    <property type="project" value="UniProtKB"/>
</dbReference>
<dbReference type="GO" id="GO:0045048">
    <property type="term" value="P:protein insertion into ER membrane"/>
    <property type="evidence" value="ECO:0000250"/>
    <property type="project" value="UniProtKB"/>
</dbReference>
<dbReference type="GO" id="GO:0006986">
    <property type="term" value="P:response to unfolded protein"/>
    <property type="evidence" value="ECO:0000250"/>
    <property type="project" value="UniProtKB"/>
</dbReference>
<dbReference type="GO" id="GO:0006616">
    <property type="term" value="P:SRP-dependent cotranslational protein targeting to membrane, translocation"/>
    <property type="evidence" value="ECO:0007669"/>
    <property type="project" value="InterPro"/>
</dbReference>
<dbReference type="InterPro" id="IPR006634">
    <property type="entry name" value="TLC-dom"/>
</dbReference>
<dbReference type="InterPro" id="IPR016447">
    <property type="entry name" value="Translocation_assoc_membrane"/>
</dbReference>
<dbReference type="PANTHER" id="PTHR12371:SF3">
    <property type="entry name" value="TRANSLOCATING CHAIN-ASSOCIATED MEMBRANE PROTEIN 1"/>
    <property type="match status" value="1"/>
</dbReference>
<dbReference type="PANTHER" id="PTHR12371">
    <property type="entry name" value="TRANSLOCATION ASSOCIATED MEMBRANE PROTEIN"/>
    <property type="match status" value="1"/>
</dbReference>
<dbReference type="Pfam" id="PF03798">
    <property type="entry name" value="TRAM_LAG1_CLN8"/>
    <property type="match status" value="1"/>
</dbReference>
<dbReference type="PIRSF" id="PIRSF005449">
    <property type="entry name" value="Translocation_assoc_membrane"/>
    <property type="match status" value="1"/>
</dbReference>
<dbReference type="SMART" id="SM00724">
    <property type="entry name" value="TLC"/>
    <property type="match status" value="1"/>
</dbReference>
<dbReference type="PROSITE" id="PS50922">
    <property type="entry name" value="TLC"/>
    <property type="match status" value="1"/>
</dbReference>
<accession>Q9GKZ4</accession>
<accession>Q3SX16</accession>
<keyword id="KW-0256">Endoplasmic reticulum</keyword>
<keyword id="KW-0325">Glycoprotein</keyword>
<keyword id="KW-0472">Membrane</keyword>
<keyword id="KW-0597">Phosphoprotein</keyword>
<keyword id="KW-0653">Protein transport</keyword>
<keyword id="KW-1185">Reference proteome</keyword>
<keyword id="KW-0811">Translocation</keyword>
<keyword id="KW-0812">Transmembrane</keyword>
<keyword id="KW-1133">Transmembrane helix</keyword>
<keyword id="KW-0813">Transport</keyword>
<protein>
    <recommendedName>
        <fullName evidence="1">Translocating chain-associated membrane protein 1</fullName>
        <shortName evidence="1">Protein TRAM1</shortName>
    </recommendedName>
</protein>
<proteinExistence type="evidence at transcript level"/>
<gene>
    <name type="primary">TRAM1</name>
    <name evidence="1" type="synonym">TRAM</name>
</gene>
<reference key="1">
    <citation type="submission" date="2005-09" db="EMBL/GenBank/DDBJ databases">
        <authorList>
            <consortium name="NIH - Mammalian Gene Collection (MGC) project"/>
        </authorList>
    </citation>
    <scope>NUCLEOTIDE SEQUENCE [LARGE SCALE MRNA]</scope>
    <source>
        <strain>Hereford</strain>
        <tissue>Ascending colon</tissue>
    </source>
</reference>
<reference key="2">
    <citation type="submission" date="1995-01" db="EMBL/GenBank/DDBJ databases">
        <title>Cloning and sequence analysis of a bovine tram cDNA.</title>
        <authorList>
            <person name="Clark T.G."/>
            <person name="Morris J."/>
            <person name="Akamatsu M."/>
            <person name="McGraw R.A."/>
            <person name="Ivarie R.D."/>
        </authorList>
    </citation>
    <scope>NUCLEOTIDE SEQUENCE [MRNA] OF 17-374</scope>
</reference>
<evidence type="ECO:0000250" key="1">
    <source>
        <dbReference type="UniProtKB" id="Q15629"/>
    </source>
</evidence>
<evidence type="ECO:0000250" key="2">
    <source>
        <dbReference type="UniProtKB" id="Q91V04"/>
    </source>
</evidence>
<evidence type="ECO:0000255" key="3"/>
<evidence type="ECO:0000255" key="4">
    <source>
        <dbReference type="PROSITE-ProRule" id="PRU00205"/>
    </source>
</evidence>
<evidence type="ECO:0000256" key="5">
    <source>
        <dbReference type="SAM" id="MobiDB-lite"/>
    </source>
</evidence>
<evidence type="ECO:0000305" key="6"/>
<comment type="function">
    <text evidence="1">Involved in the translocation of nascent protein chains into or through the endoplasmic reticulum (ER) membrane by facilitating the proper chain positioning at the SEC61 channel. Regulates the exposure of nascent secretory protein chain to the cytosol during translocation into the ER. May affect the phospholipid bilayer in the vicinity of the lateral gate of the SEC61 channel, thereby facilitating ER protein transport. Intimately associates with transmembrane (TM) domain of nascent membrane proteins during the entire integration process into the ER membrane. Associates with the second TM domain of G-protein-coupled receptor opsin/OPSD nascent chain in the ER membrane, which may facilitate its integration into the membrane. Under conditions of ER stress, participates in the disposal of misfolded ER membrane proteins during the unfolded protein response (UPR), an integrated stress response (ISR) pathway, by selectively retrotranslocating misfolded ER-membrane proteins from the ER into the cytosol where they are ubiquitinated and degraded by the proteasome.</text>
</comment>
<comment type="subunit">
    <text evidence="1">Interacts with SEC61B. May interact with Derlin-1/DERL1.</text>
</comment>
<comment type="subcellular location">
    <subcellularLocation>
        <location evidence="1">Endoplasmic reticulum membrane</location>
        <topology evidence="3">Multi-pass membrane protein</topology>
    </subcellularLocation>
</comment>
<comment type="PTM">
    <text evidence="1">N-glycosylated.</text>
</comment>
<comment type="similarity">
    <text evidence="6">Belongs to the TRAM family.</text>
</comment>
<name>TRAM1_BOVIN</name>
<feature type="chain" id="PRO_0000185528" description="Translocating chain-associated membrane protein 1">
    <location>
        <begin position="1"/>
        <end position="374"/>
    </location>
</feature>
<feature type="topological domain" description="Cytoplasmic" evidence="2">
    <location>
        <begin position="1"/>
        <end position="29"/>
    </location>
</feature>
<feature type="transmembrane region" description="Helical" evidence="3">
    <location>
        <begin position="30"/>
        <end position="50"/>
    </location>
</feature>
<feature type="topological domain" description="Lumenal" evidence="2">
    <location>
        <begin position="51"/>
        <end position="81"/>
    </location>
</feature>
<feature type="transmembrane region" description="Helical" evidence="3">
    <location>
        <begin position="82"/>
        <end position="102"/>
    </location>
</feature>
<feature type="topological domain" description="Cytoplasmic" evidence="2">
    <location>
        <begin position="103"/>
        <end position="121"/>
    </location>
</feature>
<feature type="transmembrane region" description="Helical" evidence="3">
    <location>
        <begin position="122"/>
        <end position="142"/>
    </location>
</feature>
<feature type="topological domain" description="Lumenal" evidence="2">
    <location>
        <begin position="143"/>
        <end position="159"/>
    </location>
</feature>
<feature type="transmembrane region" description="Helical" evidence="3">
    <location>
        <begin position="160"/>
        <end position="180"/>
    </location>
</feature>
<feature type="topological domain" description="Cytoplasmic" evidence="2">
    <location>
        <begin position="181"/>
        <end position="192"/>
    </location>
</feature>
<feature type="transmembrane region" description="Helical" evidence="3">
    <location>
        <begin position="193"/>
        <end position="213"/>
    </location>
</feature>
<feature type="topological domain" description="Lumenal" evidence="2">
    <location>
        <position position="214"/>
    </location>
</feature>
<feature type="transmembrane region" description="Helical" evidence="3">
    <location>
        <begin position="215"/>
        <end position="235"/>
    </location>
</feature>
<feature type="topological domain" description="Cytoplasmic" evidence="2">
    <location>
        <begin position="236"/>
        <end position="251"/>
    </location>
</feature>
<feature type="transmembrane region" description="Helical" evidence="3">
    <location>
        <begin position="252"/>
        <end position="272"/>
    </location>
</feature>
<feature type="topological domain" description="Lumenal" evidence="2">
    <location>
        <begin position="273"/>
        <end position="297"/>
    </location>
</feature>
<feature type="transmembrane region" description="Helical" evidence="3">
    <location>
        <begin position="298"/>
        <end position="318"/>
    </location>
</feature>
<feature type="topological domain" description="Cytoplasmic" evidence="2">
    <location>
        <begin position="319"/>
        <end position="374"/>
    </location>
</feature>
<feature type="domain" description="TLC" evidence="4">
    <location>
        <begin position="117"/>
        <end position="326"/>
    </location>
</feature>
<feature type="region of interest" description="Disordered" evidence="5">
    <location>
        <begin position="331"/>
        <end position="374"/>
    </location>
</feature>
<feature type="compositionally biased region" description="Basic residues" evidence="5">
    <location>
        <begin position="334"/>
        <end position="347"/>
    </location>
</feature>
<feature type="compositionally biased region" description="Polar residues" evidence="5">
    <location>
        <begin position="352"/>
        <end position="363"/>
    </location>
</feature>
<feature type="modified residue" description="Phosphoserine" evidence="1">
    <location>
        <position position="365"/>
    </location>
</feature>
<feature type="glycosylation site" description="N-linked (GlcNAc...) asparagine" evidence="3">
    <location>
        <position position="56"/>
    </location>
</feature>